<dbReference type="EC" id="1.3.98.3" evidence="1"/>
<dbReference type="EMBL" id="M98276">
    <property type="protein sequence ID" value="AAA25710.1"/>
    <property type="status" value="ALT_FRAME"/>
    <property type="molecule type" value="Genomic_DNA"/>
</dbReference>
<dbReference type="EMBL" id="M98276">
    <property type="protein sequence ID" value="AAA25711.1"/>
    <property type="status" value="ALT_FRAME"/>
    <property type="molecule type" value="Genomic_DNA"/>
</dbReference>
<dbReference type="EMBL" id="X57736">
    <property type="protein sequence ID" value="CAA40903.1"/>
    <property type="status" value="ALT_FRAME"/>
    <property type="molecule type" value="Genomic_DNA"/>
</dbReference>
<dbReference type="EMBL" id="X57736">
    <property type="protein sequence ID" value="CAA40904.1"/>
    <property type="status" value="ALT_FRAME"/>
    <property type="molecule type" value="Genomic_DNA"/>
</dbReference>
<dbReference type="EMBL" id="X97981">
    <property type="protein sequence ID" value="CAA66617.1"/>
    <property type="molecule type" value="Genomic_DNA"/>
</dbReference>
<dbReference type="EMBL" id="AE004091">
    <property type="protein sequence ID" value="AAG04935.1"/>
    <property type="molecule type" value="Genomic_DNA"/>
</dbReference>
<dbReference type="PIR" id="A83454">
    <property type="entry name" value="A83454"/>
</dbReference>
<dbReference type="RefSeq" id="NP_250237.1">
    <property type="nucleotide sequence ID" value="NC_002516.2"/>
</dbReference>
<dbReference type="RefSeq" id="WP_003087267.1">
    <property type="nucleotide sequence ID" value="NZ_QZGE01000032.1"/>
</dbReference>
<dbReference type="SMR" id="P77915"/>
<dbReference type="FunCoup" id="P77915">
    <property type="interactions" value="324"/>
</dbReference>
<dbReference type="STRING" id="208964.PA1546"/>
<dbReference type="PaxDb" id="208964-PA1546"/>
<dbReference type="GeneID" id="883053"/>
<dbReference type="KEGG" id="pae:PA1546"/>
<dbReference type="PATRIC" id="fig|208964.12.peg.1599"/>
<dbReference type="PseudoCAP" id="PA1546"/>
<dbReference type="HOGENOM" id="CLU_027579_3_0_6"/>
<dbReference type="InParanoid" id="P77915"/>
<dbReference type="OrthoDB" id="9808022at2"/>
<dbReference type="PhylomeDB" id="P77915"/>
<dbReference type="BioCyc" id="PAER208964:G1FZ6-1574-MONOMER"/>
<dbReference type="UniPathway" id="UPA00251">
    <property type="reaction ID" value="UER00323"/>
</dbReference>
<dbReference type="Proteomes" id="UP000002438">
    <property type="component" value="Chromosome"/>
</dbReference>
<dbReference type="GO" id="GO:0005737">
    <property type="term" value="C:cytoplasm"/>
    <property type="evidence" value="ECO:0000250"/>
    <property type="project" value="UniProtKB"/>
</dbReference>
<dbReference type="GO" id="GO:0051539">
    <property type="term" value="F:4 iron, 4 sulfur cluster binding"/>
    <property type="evidence" value="ECO:0000250"/>
    <property type="project" value="UniProtKB"/>
</dbReference>
<dbReference type="GO" id="GO:0051989">
    <property type="term" value="F:coproporphyrinogen dehydrogenase activity"/>
    <property type="evidence" value="ECO:0000315"/>
    <property type="project" value="UniProtKB"/>
</dbReference>
<dbReference type="GO" id="GO:0004109">
    <property type="term" value="F:coproporphyrinogen oxidase activity"/>
    <property type="evidence" value="ECO:0007669"/>
    <property type="project" value="InterPro"/>
</dbReference>
<dbReference type="GO" id="GO:0046872">
    <property type="term" value="F:metal ion binding"/>
    <property type="evidence" value="ECO:0007669"/>
    <property type="project" value="UniProtKB-KW"/>
</dbReference>
<dbReference type="GO" id="GO:0006779">
    <property type="term" value="P:porphyrin-containing compound biosynthetic process"/>
    <property type="evidence" value="ECO:0000315"/>
    <property type="project" value="UniProtKB"/>
</dbReference>
<dbReference type="GO" id="GO:0006782">
    <property type="term" value="P:protoporphyrinogen IX biosynthetic process"/>
    <property type="evidence" value="ECO:0000315"/>
    <property type="project" value="UniProtKB"/>
</dbReference>
<dbReference type="CDD" id="cd01335">
    <property type="entry name" value="Radical_SAM"/>
    <property type="match status" value="1"/>
</dbReference>
<dbReference type="FunFam" id="1.10.10.920:FF:000002">
    <property type="entry name" value="Coproporphyrinogen-III oxidase"/>
    <property type="match status" value="1"/>
</dbReference>
<dbReference type="Gene3D" id="1.10.10.920">
    <property type="match status" value="1"/>
</dbReference>
<dbReference type="Gene3D" id="3.80.30.20">
    <property type="entry name" value="tm_1862 like domain"/>
    <property type="match status" value="1"/>
</dbReference>
<dbReference type="InterPro" id="IPR004558">
    <property type="entry name" value="Coprogen_oxidase_HemN"/>
</dbReference>
<dbReference type="InterPro" id="IPR034505">
    <property type="entry name" value="Coproporphyrinogen-III_oxidase"/>
</dbReference>
<dbReference type="InterPro" id="IPR006638">
    <property type="entry name" value="Elp3/MiaA/NifB-like_rSAM"/>
</dbReference>
<dbReference type="InterPro" id="IPR010723">
    <property type="entry name" value="HemN_C"/>
</dbReference>
<dbReference type="InterPro" id="IPR007197">
    <property type="entry name" value="rSAM"/>
</dbReference>
<dbReference type="InterPro" id="IPR023404">
    <property type="entry name" value="rSAM_horseshoe"/>
</dbReference>
<dbReference type="NCBIfam" id="TIGR00538">
    <property type="entry name" value="hemN"/>
    <property type="match status" value="1"/>
</dbReference>
<dbReference type="PANTHER" id="PTHR13932">
    <property type="entry name" value="COPROPORPHYRINIGEN III OXIDASE"/>
    <property type="match status" value="1"/>
</dbReference>
<dbReference type="PANTHER" id="PTHR13932:SF6">
    <property type="entry name" value="OXYGEN-INDEPENDENT COPROPORPHYRINOGEN III OXIDASE"/>
    <property type="match status" value="1"/>
</dbReference>
<dbReference type="Pfam" id="PF06969">
    <property type="entry name" value="HemN_C"/>
    <property type="match status" value="1"/>
</dbReference>
<dbReference type="Pfam" id="PF04055">
    <property type="entry name" value="Radical_SAM"/>
    <property type="match status" value="1"/>
</dbReference>
<dbReference type="PIRSF" id="PIRSF000167">
    <property type="entry name" value="HemN"/>
    <property type="match status" value="1"/>
</dbReference>
<dbReference type="SFLD" id="SFLDG01065">
    <property type="entry name" value="anaerobic_coproporphyrinogen-I"/>
    <property type="match status" value="1"/>
</dbReference>
<dbReference type="SFLD" id="SFLDG01082">
    <property type="entry name" value="B12-binding_domain_containing"/>
    <property type="match status" value="1"/>
</dbReference>
<dbReference type="SFLD" id="SFLDF00277">
    <property type="entry name" value="oxygen-independent_coproporphy"/>
    <property type="match status" value="1"/>
</dbReference>
<dbReference type="SMART" id="SM00729">
    <property type="entry name" value="Elp3"/>
    <property type="match status" value="1"/>
</dbReference>
<dbReference type="SUPFAM" id="SSF102114">
    <property type="entry name" value="Radical SAM enzymes"/>
    <property type="match status" value="1"/>
</dbReference>
<dbReference type="PROSITE" id="PS51918">
    <property type="entry name" value="RADICAL_SAM"/>
    <property type="match status" value="1"/>
</dbReference>
<accession>P77915</accession>
<accession>Q04626</accession>
<accession>Q04627</accession>
<reference key="1">
    <citation type="submission" date="1993-01" db="EMBL/GenBank/DDBJ databases">
        <title>RpoN-independent promoters having a conserved GG-N10-GC motif in Pseudomonas aeruginosa.</title>
        <authorList>
            <person name="Savioz A."/>
            <person name="Zimmermann A."/>
            <person name="Haas D."/>
        </authorList>
    </citation>
    <scope>NUCLEOTIDE SEQUENCE [GENOMIC DNA]</scope>
    <source>
        <strain>ATCC 15692 / DSM 22644 / CIP 104116 / JCM 14847 / LMG 12228 / 1C / PRS 101 / PAO1</strain>
    </source>
</reference>
<reference key="2">
    <citation type="journal article" date="1998" name="Mol. Microbiol.">
        <title>Regulation of Pseudomonas aeruginosa hemF and hemN by the dual action of the redox response regulators Anr and Dnr.</title>
        <authorList>
            <person name="Rompf A."/>
            <person name="Hungerer C."/>
            <person name="Hoffmann T."/>
            <person name="Lindenmeyer M."/>
            <person name="Romling U."/>
            <person name="Gross U."/>
            <person name="Doss M.O."/>
            <person name="Arai H."/>
            <person name="Igarashi Y."/>
            <person name="Jahn D."/>
        </authorList>
    </citation>
    <scope>NUCLEOTIDE SEQUENCE [GENOMIC DNA]</scope>
    <scope>FUNCTION</scope>
    <scope>DISRUPTION PHENOTYPE</scope>
    <scope>INDUCTION</scope>
    <source>
        <strain>ATCC 15692 / DSM 22644 / CIP 104116 / JCM 14847 / LMG 12228 / 1C / PRS 101 / PAO1</strain>
    </source>
</reference>
<reference key="3">
    <citation type="journal article" date="2000" name="Nature">
        <title>Complete genome sequence of Pseudomonas aeruginosa PAO1, an opportunistic pathogen.</title>
        <authorList>
            <person name="Stover C.K."/>
            <person name="Pham X.-Q.T."/>
            <person name="Erwin A.L."/>
            <person name="Mizoguchi S.D."/>
            <person name="Warrener P."/>
            <person name="Hickey M.J."/>
            <person name="Brinkman F.S.L."/>
            <person name="Hufnagle W.O."/>
            <person name="Kowalik D.J."/>
            <person name="Lagrou M."/>
            <person name="Garber R.L."/>
            <person name="Goltry L."/>
            <person name="Tolentino E."/>
            <person name="Westbrock-Wadman S."/>
            <person name="Yuan Y."/>
            <person name="Brody L.L."/>
            <person name="Coulter S.N."/>
            <person name="Folger K.R."/>
            <person name="Kas A."/>
            <person name="Larbig K."/>
            <person name="Lim R.M."/>
            <person name="Smith K.A."/>
            <person name="Spencer D.H."/>
            <person name="Wong G.K.-S."/>
            <person name="Wu Z."/>
            <person name="Paulsen I.T."/>
            <person name="Reizer J."/>
            <person name="Saier M.H. Jr."/>
            <person name="Hancock R.E.W."/>
            <person name="Lory S."/>
            <person name="Olson M.V."/>
        </authorList>
    </citation>
    <scope>NUCLEOTIDE SEQUENCE [LARGE SCALE GENOMIC DNA]</scope>
    <source>
        <strain>ATCC 15692 / DSM 22644 / CIP 104116 / JCM 14847 / LMG 12228 / 1C / PRS 101 / PAO1</strain>
    </source>
</reference>
<protein>
    <recommendedName>
        <fullName>Oxygen-independent coproporphyrinogen III oxidase</fullName>
        <shortName>CPO</shortName>
        <ecNumber evidence="1">1.3.98.3</ecNumber>
    </recommendedName>
    <alternativeName>
        <fullName>Coproporphyrinogen III dehydrogenase</fullName>
        <shortName>CPDH</shortName>
    </alternativeName>
</protein>
<organism>
    <name type="scientific">Pseudomonas aeruginosa (strain ATCC 15692 / DSM 22644 / CIP 104116 / JCM 14847 / LMG 12228 / 1C / PRS 101 / PAO1)</name>
    <dbReference type="NCBI Taxonomy" id="208964"/>
    <lineage>
        <taxon>Bacteria</taxon>
        <taxon>Pseudomonadati</taxon>
        <taxon>Pseudomonadota</taxon>
        <taxon>Gammaproteobacteria</taxon>
        <taxon>Pseudomonadales</taxon>
        <taxon>Pseudomonadaceae</taxon>
        <taxon>Pseudomonas</taxon>
    </lineage>
</organism>
<gene>
    <name type="primary">hemN</name>
    <name type="ordered locus">PA1546</name>
</gene>
<name>HEMN_PSEAE</name>
<comment type="function">
    <text evidence="3">Involved in the heme biosynthesis. Catalyzes the anaerobic oxidative decarboxylation of propionate groups of rings A and B of coproporphyrinogen III to yield the vinyl groups in protoporphyrinogen IX.</text>
</comment>
<comment type="catalytic activity">
    <reaction evidence="1">
        <text>coproporphyrinogen III + 2 S-adenosyl-L-methionine = protoporphyrinogen IX + 2 5'-deoxyadenosine + 2 L-methionine + 2 CO2</text>
        <dbReference type="Rhea" id="RHEA:15425"/>
        <dbReference type="ChEBI" id="CHEBI:16526"/>
        <dbReference type="ChEBI" id="CHEBI:17319"/>
        <dbReference type="ChEBI" id="CHEBI:57307"/>
        <dbReference type="ChEBI" id="CHEBI:57309"/>
        <dbReference type="ChEBI" id="CHEBI:57844"/>
        <dbReference type="ChEBI" id="CHEBI:59789"/>
        <dbReference type="EC" id="1.3.98.3"/>
    </reaction>
</comment>
<comment type="cofactor">
    <cofactor evidence="1">
        <name>[4Fe-4S] cluster</name>
        <dbReference type="ChEBI" id="CHEBI:49883"/>
    </cofactor>
    <text evidence="1">Binds 1 [4Fe-4S] cluster. The cluster is coordinated with 3 cysteines and an exchangeable S-adenosyl-L-methionine.</text>
</comment>
<comment type="pathway">
    <text>Porphyrin-containing compound metabolism; protoporphyrin-IX biosynthesis; protoporphyrinogen-IX from coproporphyrinogen-III (AdoMet route): step 1/1.</text>
</comment>
<comment type="subunit">
    <text evidence="1">Monomer.</text>
</comment>
<comment type="subcellular location">
    <subcellularLocation>
        <location evidence="1">Cytoplasm</location>
    </subcellularLocation>
</comment>
<comment type="induction">
    <text evidence="3">By the redox response regulator Anr under aerobic and anaerobic conditions and by Dnr only under anaerobic conditions.</text>
</comment>
<comment type="disruption phenotype">
    <text evidence="3">Cells lacking this gene accumulate coproporphyrinogen-III both under aerobic and anaerobic conditions, however they do not exhibit any obvious growth defects. The hemN hemF double mutant do not abolish aerobic and anaerobic respiratory growth.</text>
</comment>
<comment type="similarity">
    <text evidence="4">Belongs to the anaerobic coproporphyrinogen-III oxidase family.</text>
</comment>
<comment type="sequence caution" evidence="4">
    <conflict type="frameshift">
        <sequence resource="EMBL-CDS" id="AAA25710"/>
    </conflict>
</comment>
<comment type="sequence caution" evidence="4">
    <conflict type="frameshift">
        <sequence resource="EMBL-CDS" id="AAA25711"/>
    </conflict>
</comment>
<comment type="sequence caution" evidence="4">
    <conflict type="frameshift">
        <sequence resource="EMBL-CDS" id="CAA40903"/>
    </conflict>
</comment>
<comment type="sequence caution" evidence="4">
    <conflict type="frameshift">
        <sequence resource="EMBL-CDS" id="CAA40904"/>
    </conflict>
</comment>
<proteinExistence type="evidence at transcript level"/>
<keyword id="KW-0004">4Fe-4S</keyword>
<keyword id="KW-0963">Cytoplasm</keyword>
<keyword id="KW-0408">Iron</keyword>
<keyword id="KW-0411">Iron-sulfur</keyword>
<keyword id="KW-0479">Metal-binding</keyword>
<keyword id="KW-0560">Oxidoreductase</keyword>
<keyword id="KW-0627">Porphyrin biosynthesis</keyword>
<keyword id="KW-1185">Reference proteome</keyword>
<keyword id="KW-0949">S-adenosyl-L-methionine</keyword>
<sequence length="460" mass="52488">MLDTIRWDADLIRRYDLSGPRYTSYPTAVQFHEGIGPFDQLHALRDSRKAGHPLSLYVHIPFCANICYYCACNKVITKDRGRSAPYLARLVREIEIVSRHLSREQVVEQLHFGGGTPTFLSPGQLRELMSQLRTHLNLLDDDSGDYGIEIDPREADWSTMGLLRELGFNRVSLGVQDFDMEVQKAVNRMQTPEETRTIVEAARTLQYRSINLDLIYGLPKQTPDSFARTVDEVIALQPDRLSVFNYAHLPERFMPQRRINADDLPSPGQKLEMLQRTTEQLAAAGYRYIGMDHFALPDDELASAQEDGTLQRNFQGYTTHGHCDLVGLGVSAISQIGDLYSQNSSDINDYQTSLDNGQLAIRRGLHCNSDDRVRRAVIQQLICHFELAFEDIETEFGIDFRSYFAELWPDLERFAADGLIRLDAKGIDITSSGRLLVRSICMLFDRYLPSLNRQRFSRVI</sequence>
<evidence type="ECO:0000250" key="1">
    <source>
        <dbReference type="UniProtKB" id="P32131"/>
    </source>
</evidence>
<evidence type="ECO:0000255" key="2">
    <source>
        <dbReference type="PROSITE-ProRule" id="PRU01266"/>
    </source>
</evidence>
<evidence type="ECO:0000269" key="3">
    <source>
    </source>
</evidence>
<evidence type="ECO:0000305" key="4"/>
<feature type="chain" id="PRO_0000109947" description="Oxygen-independent coproporphyrinogen III oxidase">
    <location>
        <begin position="1"/>
        <end position="460"/>
    </location>
</feature>
<feature type="domain" description="Radical SAM core" evidence="2">
    <location>
        <begin position="48"/>
        <end position="287"/>
    </location>
</feature>
<feature type="binding site" evidence="1">
    <location>
        <position position="57"/>
    </location>
    <ligand>
        <name>S-adenosyl-L-methionine</name>
        <dbReference type="ChEBI" id="CHEBI:59789"/>
        <label>1</label>
    </ligand>
</feature>
<feature type="binding site" evidence="1">
    <location>
        <position position="63"/>
    </location>
    <ligand>
        <name>[4Fe-4S] cluster</name>
        <dbReference type="ChEBI" id="CHEBI:49883"/>
        <note>4Fe-4S-S-AdoMet</note>
    </ligand>
</feature>
<feature type="binding site" evidence="1">
    <location>
        <position position="67"/>
    </location>
    <ligand>
        <name>[4Fe-4S] cluster</name>
        <dbReference type="ChEBI" id="CHEBI:49883"/>
        <note>4Fe-4S-S-AdoMet</note>
    </ligand>
</feature>
<feature type="binding site" evidence="1">
    <location>
        <position position="69"/>
    </location>
    <ligand>
        <name>S-adenosyl-L-methionine</name>
        <dbReference type="ChEBI" id="CHEBI:59789"/>
        <label>2</label>
    </ligand>
</feature>
<feature type="binding site" evidence="1">
    <location>
        <position position="70"/>
    </location>
    <ligand>
        <name>[4Fe-4S] cluster</name>
        <dbReference type="ChEBI" id="CHEBI:49883"/>
        <note>4Fe-4S-S-AdoMet</note>
    </ligand>
</feature>
<feature type="binding site" evidence="1">
    <location>
        <position position="114"/>
    </location>
    <ligand>
        <name>S-adenosyl-L-methionine</name>
        <dbReference type="ChEBI" id="CHEBI:59789"/>
        <label>1</label>
    </ligand>
</feature>
<feature type="binding site" evidence="1">
    <location>
        <begin position="115"/>
        <end position="116"/>
    </location>
    <ligand>
        <name>S-adenosyl-L-methionine</name>
        <dbReference type="ChEBI" id="CHEBI:59789"/>
        <label>2</label>
    </ligand>
</feature>
<feature type="binding site" evidence="1">
    <location>
        <position position="149"/>
    </location>
    <ligand>
        <name>S-adenosyl-L-methionine</name>
        <dbReference type="ChEBI" id="CHEBI:59789"/>
        <label>1</label>
    </ligand>
</feature>
<feature type="binding site" evidence="1">
    <location>
        <position position="176"/>
    </location>
    <ligand>
        <name>S-adenosyl-L-methionine</name>
        <dbReference type="ChEBI" id="CHEBI:59789"/>
        <label>2</label>
    </ligand>
</feature>
<feature type="binding site" evidence="1">
    <location>
        <position position="188"/>
    </location>
    <ligand>
        <name>S-adenosyl-L-methionine</name>
        <dbReference type="ChEBI" id="CHEBI:59789"/>
        <label>2</label>
    </ligand>
</feature>
<feature type="binding site" evidence="1">
    <location>
        <position position="213"/>
    </location>
    <ligand>
        <name>S-adenosyl-L-methionine</name>
        <dbReference type="ChEBI" id="CHEBI:59789"/>
        <label>2</label>
    </ligand>
</feature>
<feature type="binding site" evidence="1">
    <location>
        <position position="247"/>
    </location>
    <ligand>
        <name>S-adenosyl-L-methionine</name>
        <dbReference type="ChEBI" id="CHEBI:59789"/>
        <label>2</label>
    </ligand>
</feature>
<feature type="binding site" evidence="1">
    <location>
        <position position="333"/>
    </location>
    <ligand>
        <name>S-adenosyl-L-methionine</name>
        <dbReference type="ChEBI" id="CHEBI:59789"/>
        <label>1</label>
    </ligand>
</feature>
<feature type="sequence conflict" description="In Ref. 1; AAA25710 and 2; CAA66617." evidence="4" ref="1 2">
    <original>E</original>
    <variation>A</variation>
    <location>
        <position position="104"/>
    </location>
</feature>
<feature type="sequence conflict" description="In Ref. 2; CAA66617." evidence="4" ref="2">
    <original>L</original>
    <variation>P</variation>
    <location>
        <position position="422"/>
    </location>
</feature>